<comment type="function">
    <text evidence="1 4">Has antibacterial activity against Gram-positive bacterium S.pneumoniae Serotype 14. Is also active against Gram-negative bacteria M.catarrhalis 1857, and non-typeable H.influenzae strains 86-028NP and 1128. Has antifungal activity against C.albicans. May have a role in maintaining sterility in the middle ear (PubMed:14996845). May act as a ligand for C-C chemokine receptor CCR6. Positively regulates the sperm motility and bactericidal activity in a CCR6-dependent manner. Binds to CCR6 and triggers Ca2+ mobilization in the sperm which is important for its motility (By similarity).</text>
</comment>
<comment type="subunit">
    <text evidence="1">Monomer. Homodimer.</text>
</comment>
<comment type="subcellular location">
    <subcellularLocation>
        <location evidence="1">Secreted</location>
    </subcellularLocation>
    <subcellularLocation>
        <location evidence="1">Membrane</location>
    </subcellularLocation>
    <text evidence="1">Associates with tumor cell membrane-derived microvesicles.</text>
</comment>
<comment type="tissue specificity">
    <text evidence="4">Highly expressed in tongue, nasopharyngeal mucosa and skin, and to a lower extent in the Eustachian tube, lung and trachea.</text>
</comment>
<comment type="mass spectrometry" mass="5123.0" method="Electrospray" evidence="4"/>
<comment type="similarity">
    <text evidence="5">Belongs to the beta-defensin family.</text>
</comment>
<reference evidence="5" key="1">
    <citation type="journal article" date="2004" name="J. Biol. Chem.">
        <title>Identification and characterization of mucosal antimicrobial peptides expressed by the chinchilla (Chinchilla lanigera) airway.</title>
        <authorList>
            <person name="Harris R.H."/>
            <person name="Wilk D."/>
            <person name="Bevins C.L."/>
            <person name="Munson R.S. Jr."/>
            <person name="Bakaletz L.O."/>
        </authorList>
    </citation>
    <scope>NUCLEOTIDE SEQUENCE [MRNA]</scope>
    <scope>FUNCTION</scope>
    <scope>TISSUE SPECIFICITY</scope>
    <scope>MASS SPECTROMETRY</scope>
    <source>
        <tissue evidence="4">Tongue</tissue>
        <tissue evidence="4">Trachea</tissue>
    </source>
</reference>
<dbReference type="EMBL" id="AY128668">
    <property type="protein sequence ID" value="AAM97293.1"/>
    <property type="molecule type" value="mRNA"/>
</dbReference>
<dbReference type="SMR" id="P83943"/>
<dbReference type="Ensembl" id="ENSCLAT00000023558.1">
    <property type="protein sequence ID" value="ENSCLAP00000023337.1"/>
    <property type="gene ID" value="ENSCLAG00000016003.1"/>
</dbReference>
<dbReference type="GeneID" id="102004444"/>
<dbReference type="GeneTree" id="ENSGT00530000064280"/>
<dbReference type="OMA" id="RETQIGH"/>
<dbReference type="OrthoDB" id="9449637at2759"/>
<dbReference type="Proteomes" id="UP000694398">
    <property type="component" value="Unassembled WGS sequence"/>
</dbReference>
<dbReference type="GO" id="GO:0005615">
    <property type="term" value="C:extracellular space"/>
    <property type="evidence" value="ECO:0007669"/>
    <property type="project" value="TreeGrafter"/>
</dbReference>
<dbReference type="GO" id="GO:0016020">
    <property type="term" value="C:membrane"/>
    <property type="evidence" value="ECO:0000250"/>
    <property type="project" value="UniProtKB"/>
</dbReference>
<dbReference type="GO" id="GO:1990742">
    <property type="term" value="C:microvesicle"/>
    <property type="evidence" value="ECO:0000250"/>
    <property type="project" value="UniProtKB"/>
</dbReference>
<dbReference type="GO" id="GO:0097225">
    <property type="term" value="C:sperm midpiece"/>
    <property type="evidence" value="ECO:0000250"/>
    <property type="project" value="UniProtKB"/>
</dbReference>
<dbReference type="GO" id="GO:0031731">
    <property type="term" value="F:CCR6 chemokine receptor binding"/>
    <property type="evidence" value="ECO:0000250"/>
    <property type="project" value="UniProtKB"/>
</dbReference>
<dbReference type="GO" id="GO:0042056">
    <property type="term" value="F:chemoattractant activity"/>
    <property type="evidence" value="ECO:0007669"/>
    <property type="project" value="Ensembl"/>
</dbReference>
<dbReference type="GO" id="GO:0042802">
    <property type="term" value="F:identical protein binding"/>
    <property type="evidence" value="ECO:0000250"/>
    <property type="project" value="UniProtKB"/>
</dbReference>
<dbReference type="GO" id="GO:0019722">
    <property type="term" value="P:calcium-mediated signaling"/>
    <property type="evidence" value="ECO:0000250"/>
    <property type="project" value="UniProtKB"/>
</dbReference>
<dbReference type="GO" id="GO:0060326">
    <property type="term" value="P:cell chemotaxis"/>
    <property type="evidence" value="ECO:0007669"/>
    <property type="project" value="Ensembl"/>
</dbReference>
<dbReference type="GO" id="GO:0050832">
    <property type="term" value="P:defense response to fungus"/>
    <property type="evidence" value="ECO:0007669"/>
    <property type="project" value="UniProtKB-KW"/>
</dbReference>
<dbReference type="GO" id="GO:0050829">
    <property type="term" value="P:defense response to Gram-negative bacterium"/>
    <property type="evidence" value="ECO:0000250"/>
    <property type="project" value="UniProtKB"/>
</dbReference>
<dbReference type="GO" id="GO:0050830">
    <property type="term" value="P:defense response to Gram-positive bacterium"/>
    <property type="evidence" value="ECO:0000250"/>
    <property type="project" value="UniProtKB"/>
</dbReference>
<dbReference type="GO" id="GO:0051873">
    <property type="term" value="P:killing by host of symbiont cells"/>
    <property type="evidence" value="ECO:0000314"/>
    <property type="project" value="CACAO"/>
</dbReference>
<dbReference type="GO" id="GO:0060474">
    <property type="term" value="P:positive regulation of flagellated sperm motility involved in capacitation"/>
    <property type="evidence" value="ECO:0000250"/>
    <property type="project" value="UniProtKB"/>
</dbReference>
<dbReference type="FunFam" id="3.10.360.10:FF:000001">
    <property type="entry name" value="Beta-defensin 1"/>
    <property type="match status" value="1"/>
</dbReference>
<dbReference type="Gene3D" id="3.10.360.10">
    <property type="entry name" value="Antimicrobial Peptide, Beta-defensin 2, Chain A"/>
    <property type="match status" value="1"/>
</dbReference>
<dbReference type="InterPro" id="IPR001855">
    <property type="entry name" value="Defensin_beta-like"/>
</dbReference>
<dbReference type="PANTHER" id="PTHR20515">
    <property type="entry name" value="BETA-DEFENSIN"/>
    <property type="match status" value="1"/>
</dbReference>
<dbReference type="PANTHER" id="PTHR20515:SF0">
    <property type="entry name" value="BETA-DEFENSIN 103"/>
    <property type="match status" value="1"/>
</dbReference>
<dbReference type="Pfam" id="PF00711">
    <property type="entry name" value="Defensin_beta"/>
    <property type="match status" value="1"/>
</dbReference>
<dbReference type="SUPFAM" id="SSF57392">
    <property type="entry name" value="Defensin-like"/>
    <property type="match status" value="1"/>
</dbReference>
<gene>
    <name type="primary">DEFB1</name>
</gene>
<feature type="signal peptide" evidence="3">
    <location>
        <begin position="1"/>
        <end position="22"/>
    </location>
</feature>
<feature type="peptide" id="PRO_0000006896" description="Beta-defensin 1">
    <location>
        <begin position="23"/>
        <end position="67"/>
    </location>
</feature>
<feature type="disulfide bond" evidence="2">
    <location>
        <begin position="33"/>
        <end position="62"/>
    </location>
</feature>
<feature type="disulfide bond" evidence="2">
    <location>
        <begin position="40"/>
        <end position="55"/>
    </location>
</feature>
<feature type="disulfide bond" evidence="2">
    <location>
        <begin position="45"/>
        <end position="63"/>
    </location>
</feature>
<keyword id="KW-0044">Antibiotic</keyword>
<keyword id="KW-0929">Antimicrobial</keyword>
<keyword id="KW-0211">Defensin</keyword>
<keyword id="KW-1015">Disulfide bond</keyword>
<keyword id="KW-0295">Fungicide</keyword>
<keyword id="KW-0472">Membrane</keyword>
<keyword id="KW-1185">Reference proteome</keyword>
<keyword id="KW-0964">Secreted</keyword>
<keyword id="KW-0732">Signal</keyword>
<name>DEFB1_CHILA</name>
<proteinExistence type="evidence at protein level"/>
<accession>P83943</accession>
<organism evidence="6">
    <name type="scientific">Chinchilla lanigera</name>
    <name type="common">Long-tailed chinchilla</name>
    <name type="synonym">Chinchilla villidera</name>
    <dbReference type="NCBI Taxonomy" id="34839"/>
    <lineage>
        <taxon>Eukaryota</taxon>
        <taxon>Metazoa</taxon>
        <taxon>Chordata</taxon>
        <taxon>Craniata</taxon>
        <taxon>Vertebrata</taxon>
        <taxon>Euteleostomi</taxon>
        <taxon>Mammalia</taxon>
        <taxon>Eutheria</taxon>
        <taxon>Euarchontoglires</taxon>
        <taxon>Glires</taxon>
        <taxon>Rodentia</taxon>
        <taxon>Hystricomorpha</taxon>
        <taxon>Chinchillidae</taxon>
        <taxon>Chinchilla</taxon>
    </lineage>
</organism>
<sequence length="67" mass="7676">MRIHYLLFAVLFLFLMPVPGEGGIINTIQRYFCRVRGGRCAALTCLPRETQIGRCSVKGRKCCRTRK</sequence>
<protein>
    <recommendedName>
        <fullName>Beta-defensin 1</fullName>
        <shortName>BD-1</shortName>
    </recommendedName>
    <alternativeName>
        <fullName>Defensin, beta 1</fullName>
    </alternativeName>
    <alternativeName>
        <fullName>cBD-1</fullName>
    </alternativeName>
</protein>
<evidence type="ECO:0000250" key="1">
    <source>
        <dbReference type="UniProtKB" id="P60022"/>
    </source>
</evidence>
<evidence type="ECO:0000250" key="2">
    <source>
        <dbReference type="UniProtKB" id="P81534"/>
    </source>
</evidence>
<evidence type="ECO:0000255" key="3"/>
<evidence type="ECO:0000269" key="4">
    <source>
    </source>
</evidence>
<evidence type="ECO:0000305" key="5"/>
<evidence type="ECO:0000312" key="6">
    <source>
        <dbReference type="EMBL" id="AAM97293.1"/>
    </source>
</evidence>